<dbReference type="EC" id="2.7.1.71" evidence="1"/>
<dbReference type="EMBL" id="CP001339">
    <property type="protein sequence ID" value="ACL74099.1"/>
    <property type="molecule type" value="Genomic_DNA"/>
</dbReference>
<dbReference type="RefSeq" id="WP_012639561.1">
    <property type="nucleotide sequence ID" value="NC_011901.1"/>
</dbReference>
<dbReference type="SMR" id="B8GPV2"/>
<dbReference type="STRING" id="396588.Tgr7_3029"/>
<dbReference type="KEGG" id="tgr:Tgr7_3029"/>
<dbReference type="eggNOG" id="COG0703">
    <property type="taxonomic scope" value="Bacteria"/>
</dbReference>
<dbReference type="HOGENOM" id="CLU_057607_2_2_6"/>
<dbReference type="OrthoDB" id="9800332at2"/>
<dbReference type="UniPathway" id="UPA00053">
    <property type="reaction ID" value="UER00088"/>
</dbReference>
<dbReference type="Proteomes" id="UP000002383">
    <property type="component" value="Chromosome"/>
</dbReference>
<dbReference type="GO" id="GO:0005829">
    <property type="term" value="C:cytosol"/>
    <property type="evidence" value="ECO:0007669"/>
    <property type="project" value="TreeGrafter"/>
</dbReference>
<dbReference type="GO" id="GO:0005524">
    <property type="term" value="F:ATP binding"/>
    <property type="evidence" value="ECO:0007669"/>
    <property type="project" value="UniProtKB-UniRule"/>
</dbReference>
<dbReference type="GO" id="GO:0000287">
    <property type="term" value="F:magnesium ion binding"/>
    <property type="evidence" value="ECO:0007669"/>
    <property type="project" value="UniProtKB-UniRule"/>
</dbReference>
<dbReference type="GO" id="GO:0004765">
    <property type="term" value="F:shikimate kinase activity"/>
    <property type="evidence" value="ECO:0007669"/>
    <property type="project" value="UniProtKB-UniRule"/>
</dbReference>
<dbReference type="GO" id="GO:0008652">
    <property type="term" value="P:amino acid biosynthetic process"/>
    <property type="evidence" value="ECO:0007669"/>
    <property type="project" value="UniProtKB-KW"/>
</dbReference>
<dbReference type="GO" id="GO:0009073">
    <property type="term" value="P:aromatic amino acid family biosynthetic process"/>
    <property type="evidence" value="ECO:0007669"/>
    <property type="project" value="UniProtKB-KW"/>
</dbReference>
<dbReference type="GO" id="GO:0009423">
    <property type="term" value="P:chorismate biosynthetic process"/>
    <property type="evidence" value="ECO:0007669"/>
    <property type="project" value="UniProtKB-UniRule"/>
</dbReference>
<dbReference type="CDD" id="cd00464">
    <property type="entry name" value="SK"/>
    <property type="match status" value="1"/>
</dbReference>
<dbReference type="Gene3D" id="3.40.50.300">
    <property type="entry name" value="P-loop containing nucleotide triphosphate hydrolases"/>
    <property type="match status" value="1"/>
</dbReference>
<dbReference type="HAMAP" id="MF_00109">
    <property type="entry name" value="Shikimate_kinase"/>
    <property type="match status" value="1"/>
</dbReference>
<dbReference type="InterPro" id="IPR027417">
    <property type="entry name" value="P-loop_NTPase"/>
</dbReference>
<dbReference type="InterPro" id="IPR031322">
    <property type="entry name" value="Shikimate/glucono_kinase"/>
</dbReference>
<dbReference type="InterPro" id="IPR000623">
    <property type="entry name" value="Shikimate_kinase/TSH1"/>
</dbReference>
<dbReference type="InterPro" id="IPR023000">
    <property type="entry name" value="Shikimate_kinase_CS"/>
</dbReference>
<dbReference type="NCBIfam" id="NF003456">
    <property type="entry name" value="PRK05057.1"/>
    <property type="match status" value="1"/>
</dbReference>
<dbReference type="PANTHER" id="PTHR21087">
    <property type="entry name" value="SHIKIMATE KINASE"/>
    <property type="match status" value="1"/>
</dbReference>
<dbReference type="PANTHER" id="PTHR21087:SF16">
    <property type="entry name" value="SHIKIMATE KINASE 1, CHLOROPLASTIC"/>
    <property type="match status" value="1"/>
</dbReference>
<dbReference type="Pfam" id="PF01202">
    <property type="entry name" value="SKI"/>
    <property type="match status" value="1"/>
</dbReference>
<dbReference type="PRINTS" id="PR01100">
    <property type="entry name" value="SHIKIMTKNASE"/>
</dbReference>
<dbReference type="SUPFAM" id="SSF52540">
    <property type="entry name" value="P-loop containing nucleoside triphosphate hydrolases"/>
    <property type="match status" value="1"/>
</dbReference>
<dbReference type="PROSITE" id="PS01128">
    <property type="entry name" value="SHIKIMATE_KINASE"/>
    <property type="match status" value="1"/>
</dbReference>
<accession>B8GPV2</accession>
<proteinExistence type="inferred from homology"/>
<organism>
    <name type="scientific">Thioalkalivibrio sulfidiphilus (strain HL-EbGR7)</name>
    <dbReference type="NCBI Taxonomy" id="396588"/>
    <lineage>
        <taxon>Bacteria</taxon>
        <taxon>Pseudomonadati</taxon>
        <taxon>Pseudomonadota</taxon>
        <taxon>Gammaproteobacteria</taxon>
        <taxon>Chromatiales</taxon>
        <taxon>Ectothiorhodospiraceae</taxon>
        <taxon>Thioalkalivibrio</taxon>
    </lineage>
</organism>
<sequence length="190" mass="21534">MTQTSNIILIGPMGAGKSTIGRQLAAALHLPFRDSDKEIEKRTGVDIPTIFEFEGEEGFRNRESAMLEELCTEQGIVLATGGGAVMRPQNRALLRDCGLVVYLKTSVKTQLRRTARDRNRPLLQTENPRARLEELMRIRDPLYREIAELTVDTDRDSIRKVVQEISRYYRMNNKDSIPQDDSNTEPQGDG</sequence>
<gene>
    <name evidence="1" type="primary">aroK</name>
    <name type="ordered locus">Tgr7_3029</name>
</gene>
<reference key="1">
    <citation type="journal article" date="2011" name="Stand. Genomic Sci.">
        <title>Complete genome sequence of 'Thioalkalivibrio sulfidophilus' HL-EbGr7.</title>
        <authorList>
            <person name="Muyzer G."/>
            <person name="Sorokin D.Y."/>
            <person name="Mavromatis K."/>
            <person name="Lapidus A."/>
            <person name="Clum A."/>
            <person name="Ivanova N."/>
            <person name="Pati A."/>
            <person name="d'Haeseleer P."/>
            <person name="Woyke T."/>
            <person name="Kyrpides N.C."/>
        </authorList>
    </citation>
    <scope>NUCLEOTIDE SEQUENCE [LARGE SCALE GENOMIC DNA]</scope>
    <source>
        <strain>HL-EbGR7</strain>
    </source>
</reference>
<keyword id="KW-0028">Amino-acid biosynthesis</keyword>
<keyword id="KW-0057">Aromatic amino acid biosynthesis</keyword>
<keyword id="KW-0067">ATP-binding</keyword>
<keyword id="KW-0963">Cytoplasm</keyword>
<keyword id="KW-0418">Kinase</keyword>
<keyword id="KW-0460">Magnesium</keyword>
<keyword id="KW-0479">Metal-binding</keyword>
<keyword id="KW-0547">Nucleotide-binding</keyword>
<keyword id="KW-1185">Reference proteome</keyword>
<keyword id="KW-0808">Transferase</keyword>
<protein>
    <recommendedName>
        <fullName evidence="1">Shikimate kinase</fullName>
        <shortName evidence="1">SK</shortName>
        <ecNumber evidence="1">2.7.1.71</ecNumber>
    </recommendedName>
</protein>
<evidence type="ECO:0000255" key="1">
    <source>
        <dbReference type="HAMAP-Rule" id="MF_00109"/>
    </source>
</evidence>
<feature type="chain" id="PRO_1000119067" description="Shikimate kinase">
    <location>
        <begin position="1"/>
        <end position="190"/>
    </location>
</feature>
<feature type="binding site" evidence="1">
    <location>
        <begin position="14"/>
        <end position="19"/>
    </location>
    <ligand>
        <name>ATP</name>
        <dbReference type="ChEBI" id="CHEBI:30616"/>
    </ligand>
</feature>
<feature type="binding site" evidence="1">
    <location>
        <position position="18"/>
    </location>
    <ligand>
        <name>Mg(2+)</name>
        <dbReference type="ChEBI" id="CHEBI:18420"/>
    </ligand>
</feature>
<feature type="binding site" evidence="1">
    <location>
        <position position="36"/>
    </location>
    <ligand>
        <name>substrate</name>
    </ligand>
</feature>
<feature type="binding site" evidence="1">
    <location>
        <position position="60"/>
    </location>
    <ligand>
        <name>substrate</name>
    </ligand>
</feature>
<feature type="binding site" evidence="1">
    <location>
        <position position="82"/>
    </location>
    <ligand>
        <name>substrate</name>
    </ligand>
</feature>
<feature type="binding site" evidence="1">
    <location>
        <position position="120"/>
    </location>
    <ligand>
        <name>ATP</name>
        <dbReference type="ChEBI" id="CHEBI:30616"/>
    </ligand>
</feature>
<feature type="binding site" evidence="1">
    <location>
        <position position="139"/>
    </location>
    <ligand>
        <name>substrate</name>
    </ligand>
</feature>
<comment type="function">
    <text evidence="1">Catalyzes the specific phosphorylation of the 3-hydroxyl group of shikimic acid using ATP as a cosubstrate.</text>
</comment>
<comment type="catalytic activity">
    <reaction evidence="1">
        <text>shikimate + ATP = 3-phosphoshikimate + ADP + H(+)</text>
        <dbReference type="Rhea" id="RHEA:13121"/>
        <dbReference type="ChEBI" id="CHEBI:15378"/>
        <dbReference type="ChEBI" id="CHEBI:30616"/>
        <dbReference type="ChEBI" id="CHEBI:36208"/>
        <dbReference type="ChEBI" id="CHEBI:145989"/>
        <dbReference type="ChEBI" id="CHEBI:456216"/>
        <dbReference type="EC" id="2.7.1.71"/>
    </reaction>
</comment>
<comment type="cofactor">
    <cofactor evidence="1">
        <name>Mg(2+)</name>
        <dbReference type="ChEBI" id="CHEBI:18420"/>
    </cofactor>
    <text evidence="1">Binds 1 Mg(2+) ion per subunit.</text>
</comment>
<comment type="pathway">
    <text evidence="1">Metabolic intermediate biosynthesis; chorismate biosynthesis; chorismate from D-erythrose 4-phosphate and phosphoenolpyruvate: step 5/7.</text>
</comment>
<comment type="subunit">
    <text evidence="1">Monomer.</text>
</comment>
<comment type="subcellular location">
    <subcellularLocation>
        <location evidence="1">Cytoplasm</location>
    </subcellularLocation>
</comment>
<comment type="similarity">
    <text evidence="1">Belongs to the shikimate kinase family.</text>
</comment>
<name>AROK_THISH</name>